<sequence length="207" mass="23686">MTLPDFRLIRLLPLASLVLTACTLPGHKGPGKSPDSPQWRQHQQEVRHLNQYQTRGAFAYISDDQKVYARFFWQQTGQDRYRLLLTNPLGSTELELNAQPGNVQLVDNKGQRYTADDAEEMIGKLTGMPIPLNSLRQWILGLPGDATDYKLDDQYRLSEVNYRQDGKNWKVVYGGYDSKTQPAMPANMELSDGSQRIKLKMDNWIVK</sequence>
<gene>
    <name evidence="1" type="primary">lolB</name>
    <name type="ordered locus">SPC_1954</name>
</gene>
<protein>
    <recommendedName>
        <fullName evidence="1">Outer-membrane lipoprotein LolB</fullName>
    </recommendedName>
</protein>
<proteinExistence type="inferred from homology"/>
<accession>C0Q358</accession>
<comment type="function">
    <text evidence="1">Plays a critical role in the incorporation of lipoproteins in the outer membrane after they are released by the LolA protein.</text>
</comment>
<comment type="subunit">
    <text evidence="1">Monomer.</text>
</comment>
<comment type="subcellular location">
    <subcellularLocation>
        <location evidence="1">Cell outer membrane</location>
        <topology evidence="1">Lipid-anchor</topology>
    </subcellularLocation>
</comment>
<comment type="similarity">
    <text evidence="1">Belongs to the LolB family.</text>
</comment>
<keyword id="KW-0998">Cell outer membrane</keyword>
<keyword id="KW-0143">Chaperone</keyword>
<keyword id="KW-0449">Lipoprotein</keyword>
<keyword id="KW-0472">Membrane</keyword>
<keyword id="KW-0564">Palmitate</keyword>
<keyword id="KW-0653">Protein transport</keyword>
<keyword id="KW-0732">Signal</keyword>
<keyword id="KW-0813">Transport</keyword>
<evidence type="ECO:0000255" key="1">
    <source>
        <dbReference type="HAMAP-Rule" id="MF_00233"/>
    </source>
</evidence>
<feature type="signal peptide" evidence="1">
    <location>
        <begin position="1"/>
        <end position="21"/>
    </location>
</feature>
<feature type="chain" id="PRO_1000190862" description="Outer-membrane lipoprotein LolB">
    <location>
        <begin position="22"/>
        <end position="207"/>
    </location>
</feature>
<feature type="lipid moiety-binding region" description="N-palmitoyl cysteine" evidence="1">
    <location>
        <position position="22"/>
    </location>
</feature>
<feature type="lipid moiety-binding region" description="S-diacylglycerol cysteine" evidence="1">
    <location>
        <position position="22"/>
    </location>
</feature>
<name>LOLB_SALPC</name>
<reference key="1">
    <citation type="journal article" date="2009" name="PLoS ONE">
        <title>Salmonella paratyphi C: genetic divergence from Salmonella choleraesuis and pathogenic convergence with Salmonella typhi.</title>
        <authorList>
            <person name="Liu W.-Q."/>
            <person name="Feng Y."/>
            <person name="Wang Y."/>
            <person name="Zou Q.-H."/>
            <person name="Chen F."/>
            <person name="Guo J.-T."/>
            <person name="Peng Y.-H."/>
            <person name="Jin Y."/>
            <person name="Li Y.-G."/>
            <person name="Hu S.-N."/>
            <person name="Johnston R.N."/>
            <person name="Liu G.-R."/>
            <person name="Liu S.-L."/>
        </authorList>
    </citation>
    <scope>NUCLEOTIDE SEQUENCE [LARGE SCALE GENOMIC DNA]</scope>
    <source>
        <strain>RKS4594</strain>
    </source>
</reference>
<organism>
    <name type="scientific">Salmonella paratyphi C (strain RKS4594)</name>
    <dbReference type="NCBI Taxonomy" id="476213"/>
    <lineage>
        <taxon>Bacteria</taxon>
        <taxon>Pseudomonadati</taxon>
        <taxon>Pseudomonadota</taxon>
        <taxon>Gammaproteobacteria</taxon>
        <taxon>Enterobacterales</taxon>
        <taxon>Enterobacteriaceae</taxon>
        <taxon>Salmonella</taxon>
    </lineage>
</organism>
<dbReference type="EMBL" id="CP000857">
    <property type="protein sequence ID" value="ACN46090.1"/>
    <property type="molecule type" value="Genomic_DNA"/>
</dbReference>
<dbReference type="RefSeq" id="WP_000174484.1">
    <property type="nucleotide sequence ID" value="NC_012125.1"/>
</dbReference>
<dbReference type="SMR" id="C0Q358"/>
<dbReference type="KEGG" id="sei:SPC_1954"/>
<dbReference type="HOGENOM" id="CLU_092816_1_1_6"/>
<dbReference type="Proteomes" id="UP000001599">
    <property type="component" value="Chromosome"/>
</dbReference>
<dbReference type="GO" id="GO:0009279">
    <property type="term" value="C:cell outer membrane"/>
    <property type="evidence" value="ECO:0007669"/>
    <property type="project" value="UniProtKB-SubCell"/>
</dbReference>
<dbReference type="GO" id="GO:0044874">
    <property type="term" value="P:lipoprotein localization to outer membrane"/>
    <property type="evidence" value="ECO:0007669"/>
    <property type="project" value="UniProtKB-UniRule"/>
</dbReference>
<dbReference type="GO" id="GO:0015031">
    <property type="term" value="P:protein transport"/>
    <property type="evidence" value="ECO:0007669"/>
    <property type="project" value="UniProtKB-KW"/>
</dbReference>
<dbReference type="CDD" id="cd16326">
    <property type="entry name" value="LolB"/>
    <property type="match status" value="1"/>
</dbReference>
<dbReference type="FunFam" id="2.50.20.10:FF:000002">
    <property type="entry name" value="Outer-membrane lipoprotein LolB"/>
    <property type="match status" value="1"/>
</dbReference>
<dbReference type="Gene3D" id="2.50.20.10">
    <property type="entry name" value="Lipoprotein localisation LolA/LolB/LppX"/>
    <property type="match status" value="1"/>
</dbReference>
<dbReference type="HAMAP" id="MF_00233">
    <property type="entry name" value="LolB"/>
    <property type="match status" value="1"/>
</dbReference>
<dbReference type="InterPro" id="IPR029046">
    <property type="entry name" value="LolA/LolB/LppX"/>
</dbReference>
<dbReference type="InterPro" id="IPR004565">
    <property type="entry name" value="OM_lipoprot_LolB"/>
</dbReference>
<dbReference type="NCBIfam" id="TIGR00548">
    <property type="entry name" value="lolB"/>
    <property type="match status" value="1"/>
</dbReference>
<dbReference type="Pfam" id="PF03550">
    <property type="entry name" value="LolB"/>
    <property type="match status" value="1"/>
</dbReference>
<dbReference type="SUPFAM" id="SSF89392">
    <property type="entry name" value="Prokaryotic lipoproteins and lipoprotein localization factors"/>
    <property type="match status" value="1"/>
</dbReference>
<dbReference type="PROSITE" id="PS51257">
    <property type="entry name" value="PROKAR_LIPOPROTEIN"/>
    <property type="match status" value="1"/>
</dbReference>